<protein>
    <recommendedName>
        <fullName>Signal transduction histidine-protein kinase/phosphatase MprB</fullName>
        <ecNumber>2.7.13.3</ecNumber>
        <ecNumber>3.1.3.-</ecNumber>
    </recommendedName>
    <alternativeName>
        <fullName>Mycobacterial persistence regulator B</fullName>
    </alternativeName>
</protein>
<proteinExistence type="inferred from homology"/>
<comment type="function">
    <text evidence="1">Member of the two-component regulatory system MprB/MprA which contributes to maintaining a balance among several systems involved in stress resistance and is required for establishment and maintenance of persistent infection in the host. In response to environmental signals MprB acts both as a membrane-associated protein kinase that undergoes autophosphorylation and subsequently transfers the phosphate to MprA, and a protein phosphatase that dephosphorylates phospho-MprA (By similarity).</text>
</comment>
<comment type="catalytic activity">
    <reaction>
        <text>ATP + protein L-histidine = ADP + protein N-phospho-L-histidine.</text>
        <dbReference type="EC" id="2.7.13.3"/>
    </reaction>
</comment>
<comment type="cofactor">
    <cofactor evidence="1">
        <name>Mg(2+)</name>
        <dbReference type="ChEBI" id="CHEBI:18420"/>
    </cofactor>
    <cofactor evidence="1">
        <name>Mn(2+)</name>
        <dbReference type="ChEBI" id="CHEBI:29035"/>
    </cofactor>
</comment>
<comment type="subcellular location">
    <subcellularLocation>
        <location evidence="6">Cell membrane</location>
        <topology evidence="6">Multi-pass membrane protein</topology>
    </subcellularLocation>
</comment>
<comment type="PTM">
    <text evidence="1">Autophosphorylated.</text>
</comment>
<comment type="sequence caution" evidence="6">
    <conflict type="erroneous initiation">
        <sequence resource="EMBL-CDS" id="ABK66791"/>
    </conflict>
</comment>
<organism>
    <name type="scientific">Mycobacterium avium (strain 104)</name>
    <dbReference type="NCBI Taxonomy" id="243243"/>
    <lineage>
        <taxon>Bacteria</taxon>
        <taxon>Bacillati</taxon>
        <taxon>Actinomycetota</taxon>
        <taxon>Actinomycetes</taxon>
        <taxon>Mycobacteriales</taxon>
        <taxon>Mycobacteriaceae</taxon>
        <taxon>Mycobacterium</taxon>
        <taxon>Mycobacterium avium complex (MAC)</taxon>
    </lineage>
</organism>
<name>MPRB_MYCA1</name>
<evidence type="ECO:0000250" key="1"/>
<evidence type="ECO:0000255" key="2"/>
<evidence type="ECO:0000255" key="3">
    <source>
        <dbReference type="PROSITE-ProRule" id="PRU00102"/>
    </source>
</evidence>
<evidence type="ECO:0000255" key="4">
    <source>
        <dbReference type="PROSITE-ProRule" id="PRU00107"/>
    </source>
</evidence>
<evidence type="ECO:0000256" key="5">
    <source>
        <dbReference type="SAM" id="MobiDB-lite"/>
    </source>
</evidence>
<evidence type="ECO:0000305" key="6"/>
<gene>
    <name type="primary">mprB</name>
    <name type="ordered locus">MAV_1095</name>
</gene>
<sequence length="522" mass="56175">MIRLHRPQRPPLRAPLRATPSLSLRWRVMLLAMSMVAMVVVLMAFAVYAVISAALYSDIDNQLQSRAQLLIASGSLAADPGKAIEGTAYSDVNAMLVNPGHAIYTAQQPGQTLPVGSPEKAVIHGELFMSRRTAGDQRILAVHLQNGTSLLISKSLKPTEAVMNKLRWVLLIVGGVGVAVAAVAGGMVTRAGLRPVARLTEAAERVARTDDLRPIPVFGSDELARLTESFNLMLRALAESRERQARLVTDAGHELRTPLTSLRTNVELLMASMEPGAPRLPEQEMVELRADVLAQIEELSTLVGDLVDLTRDDAGQVVHEPVDMSDVIDRSLERVRRRRNDIHFDVDVTPWQMYGDAAGLSRAVLNLLDNAAKWSPPGGHVGVTMRQLDPSHAELVVSDHGPGIPPQERRLVFERFYRSTSARAMPGSGLGLAIVKKVVLNHGGMLRVEDTVPGGQPPGTSFYVLLPGRPLPPAGHSTPAGESETDKAEAATDPAVPVAGDTANSRESANVISVDSQSARAR</sequence>
<feature type="chain" id="PRO_0000308431" description="Signal transduction histidine-protein kinase/phosphatase MprB">
    <location>
        <begin position="1"/>
        <end position="522"/>
    </location>
</feature>
<feature type="topological domain" description="Cytoplasmic" evidence="2">
    <location>
        <begin position="1"/>
        <end position="30"/>
    </location>
</feature>
<feature type="transmembrane region" description="Helical" evidence="2">
    <location>
        <begin position="31"/>
        <end position="51"/>
    </location>
</feature>
<feature type="topological domain" description="Extracellular" evidence="2">
    <location>
        <begin position="52"/>
        <end position="167"/>
    </location>
</feature>
<feature type="transmembrane region" description="Helical" evidence="2">
    <location>
        <begin position="168"/>
        <end position="188"/>
    </location>
</feature>
<feature type="topological domain" description="Cytoplasmic" evidence="2">
    <location>
        <begin position="189"/>
        <end position="522"/>
    </location>
</feature>
<feature type="domain" description="HAMP" evidence="3">
    <location>
        <begin position="190"/>
        <end position="242"/>
    </location>
</feature>
<feature type="domain" description="Histidine kinase" evidence="4">
    <location>
        <begin position="250"/>
        <end position="470"/>
    </location>
</feature>
<feature type="region of interest" description="Disordered" evidence="5">
    <location>
        <begin position="468"/>
        <end position="522"/>
    </location>
</feature>
<feature type="compositionally biased region" description="Polar residues" evidence="5">
    <location>
        <begin position="502"/>
        <end position="522"/>
    </location>
</feature>
<feature type="modified residue" description="Phosphohistidine; by autocatalysis" evidence="4">
    <location>
        <position position="253"/>
    </location>
</feature>
<dbReference type="EC" id="2.7.13.3"/>
<dbReference type="EC" id="3.1.3.-"/>
<dbReference type="EMBL" id="CP000479">
    <property type="protein sequence ID" value="ABK66791.1"/>
    <property type="status" value="ALT_INIT"/>
    <property type="molecule type" value="Genomic_DNA"/>
</dbReference>
<dbReference type="RefSeq" id="WP_019732008.1">
    <property type="nucleotide sequence ID" value="NC_008595.1"/>
</dbReference>
<dbReference type="SMR" id="A0QBR0"/>
<dbReference type="KEGG" id="mav:MAV_1095"/>
<dbReference type="HOGENOM" id="CLU_000445_89_6_11"/>
<dbReference type="Proteomes" id="UP000001574">
    <property type="component" value="Chromosome"/>
</dbReference>
<dbReference type="GO" id="GO:0005886">
    <property type="term" value="C:plasma membrane"/>
    <property type="evidence" value="ECO:0007669"/>
    <property type="project" value="UniProtKB-SubCell"/>
</dbReference>
<dbReference type="GO" id="GO:0005524">
    <property type="term" value="F:ATP binding"/>
    <property type="evidence" value="ECO:0007669"/>
    <property type="project" value="UniProtKB-KW"/>
</dbReference>
<dbReference type="GO" id="GO:0004721">
    <property type="term" value="F:phosphoprotein phosphatase activity"/>
    <property type="evidence" value="ECO:0007669"/>
    <property type="project" value="UniProtKB-KW"/>
</dbReference>
<dbReference type="GO" id="GO:0000155">
    <property type="term" value="F:phosphorelay sensor kinase activity"/>
    <property type="evidence" value="ECO:0007669"/>
    <property type="project" value="InterPro"/>
</dbReference>
<dbReference type="CDD" id="cd06225">
    <property type="entry name" value="HAMP"/>
    <property type="match status" value="1"/>
</dbReference>
<dbReference type="CDD" id="cd00075">
    <property type="entry name" value="HATPase"/>
    <property type="match status" value="1"/>
</dbReference>
<dbReference type="CDD" id="cd00082">
    <property type="entry name" value="HisKA"/>
    <property type="match status" value="1"/>
</dbReference>
<dbReference type="FunFam" id="1.10.287.130:FF:000031">
    <property type="entry name" value="Two-component sensor histidine kinase"/>
    <property type="match status" value="1"/>
</dbReference>
<dbReference type="FunFam" id="3.30.565.10:FF:000066">
    <property type="entry name" value="Two-component sensor kinase MprB"/>
    <property type="match status" value="1"/>
</dbReference>
<dbReference type="Gene3D" id="1.10.287.130">
    <property type="match status" value="1"/>
</dbReference>
<dbReference type="Gene3D" id="6.10.340.10">
    <property type="match status" value="1"/>
</dbReference>
<dbReference type="Gene3D" id="3.30.565.10">
    <property type="entry name" value="Histidine kinase-like ATPase, C-terminal domain"/>
    <property type="match status" value="1"/>
</dbReference>
<dbReference type="InterPro" id="IPR050980">
    <property type="entry name" value="2C_sensor_his_kinase"/>
</dbReference>
<dbReference type="InterPro" id="IPR003660">
    <property type="entry name" value="HAMP_dom"/>
</dbReference>
<dbReference type="InterPro" id="IPR036890">
    <property type="entry name" value="HATPase_C_sf"/>
</dbReference>
<dbReference type="InterPro" id="IPR005467">
    <property type="entry name" value="His_kinase_dom"/>
</dbReference>
<dbReference type="InterPro" id="IPR003661">
    <property type="entry name" value="HisK_dim/P_dom"/>
</dbReference>
<dbReference type="InterPro" id="IPR036097">
    <property type="entry name" value="HisK_dim/P_sf"/>
</dbReference>
<dbReference type="InterPro" id="IPR004358">
    <property type="entry name" value="Sig_transdc_His_kin-like_C"/>
</dbReference>
<dbReference type="PANTHER" id="PTHR44936">
    <property type="entry name" value="SENSOR PROTEIN CREC"/>
    <property type="match status" value="1"/>
</dbReference>
<dbReference type="PANTHER" id="PTHR44936:SF9">
    <property type="entry name" value="SENSOR PROTEIN CREC"/>
    <property type="match status" value="1"/>
</dbReference>
<dbReference type="Pfam" id="PF00672">
    <property type="entry name" value="HAMP"/>
    <property type="match status" value="1"/>
</dbReference>
<dbReference type="Pfam" id="PF02518">
    <property type="entry name" value="HATPase_c"/>
    <property type="match status" value="1"/>
</dbReference>
<dbReference type="Pfam" id="PF00512">
    <property type="entry name" value="HisKA"/>
    <property type="match status" value="1"/>
</dbReference>
<dbReference type="PRINTS" id="PR00344">
    <property type="entry name" value="BCTRLSENSOR"/>
</dbReference>
<dbReference type="SMART" id="SM00304">
    <property type="entry name" value="HAMP"/>
    <property type="match status" value="1"/>
</dbReference>
<dbReference type="SMART" id="SM00387">
    <property type="entry name" value="HATPase_c"/>
    <property type="match status" value="1"/>
</dbReference>
<dbReference type="SMART" id="SM00388">
    <property type="entry name" value="HisKA"/>
    <property type="match status" value="1"/>
</dbReference>
<dbReference type="SUPFAM" id="SSF55874">
    <property type="entry name" value="ATPase domain of HSP90 chaperone/DNA topoisomerase II/histidine kinase"/>
    <property type="match status" value="1"/>
</dbReference>
<dbReference type="SUPFAM" id="SSF158472">
    <property type="entry name" value="HAMP domain-like"/>
    <property type="match status" value="1"/>
</dbReference>
<dbReference type="SUPFAM" id="SSF47384">
    <property type="entry name" value="Homodimeric domain of signal transducing histidine kinase"/>
    <property type="match status" value="1"/>
</dbReference>
<dbReference type="PROSITE" id="PS50885">
    <property type="entry name" value="HAMP"/>
    <property type="match status" value="1"/>
</dbReference>
<dbReference type="PROSITE" id="PS50109">
    <property type="entry name" value="HIS_KIN"/>
    <property type="match status" value="1"/>
</dbReference>
<accession>A0QBR0</accession>
<reference key="1">
    <citation type="submission" date="2006-10" db="EMBL/GenBank/DDBJ databases">
        <authorList>
            <person name="Fleischmann R.D."/>
            <person name="Dodson R.J."/>
            <person name="Haft D.H."/>
            <person name="Merkel J.S."/>
            <person name="Nelson W.C."/>
            <person name="Fraser C.M."/>
        </authorList>
    </citation>
    <scope>NUCLEOTIDE SEQUENCE [LARGE SCALE GENOMIC DNA]</scope>
    <source>
        <strain>104</strain>
    </source>
</reference>
<keyword id="KW-0067">ATP-binding</keyword>
<keyword id="KW-1003">Cell membrane</keyword>
<keyword id="KW-0378">Hydrolase</keyword>
<keyword id="KW-0418">Kinase</keyword>
<keyword id="KW-0460">Magnesium</keyword>
<keyword id="KW-0464">Manganese</keyword>
<keyword id="KW-0472">Membrane</keyword>
<keyword id="KW-0547">Nucleotide-binding</keyword>
<keyword id="KW-0597">Phosphoprotein</keyword>
<keyword id="KW-0904">Protein phosphatase</keyword>
<keyword id="KW-0346">Stress response</keyword>
<keyword id="KW-0808">Transferase</keyword>
<keyword id="KW-0812">Transmembrane</keyword>
<keyword id="KW-1133">Transmembrane helix</keyword>
<keyword id="KW-0902">Two-component regulatory system</keyword>
<keyword id="KW-0843">Virulence</keyword>